<name>P2RX5_HUMAN</name>
<reference key="1">
    <citation type="submission" date="1996-09" db="EMBL/GenBank/DDBJ databases">
        <title>Cloning of human P2X purinoceptor new subtype (P2X5).</title>
        <authorList>
            <person name="Tokuyama Y."/>
            <person name="Mereu L."/>
            <person name="Chen X."/>
            <person name="Rouard M."/>
            <person name="Bell G.I."/>
        </authorList>
    </citation>
    <scope>NUCLEOTIDE SEQUENCE [MRNA] (ISOFORMS 2 AND 3)</scope>
</reference>
<reference key="2">
    <citation type="journal article" date="1997" name="FEBS Lett.">
        <title>Primary structure and expression of a naturally truncated human P2X ATP receptor subunit from brain and immune system.</title>
        <authorList>
            <person name="Le K.-T."/>
            <person name="Paquet M."/>
            <person name="Nouel D."/>
            <person name="Babinski K."/>
            <person name="Seguela P."/>
        </authorList>
    </citation>
    <scope>NUCLEOTIDE SEQUENCE [MRNA] (ISOFORM 1)</scope>
    <scope>FUNCTION (ISOFORM 1)</scope>
    <source>
        <tissue>Brain</tissue>
    </source>
</reference>
<reference key="3">
    <citation type="journal article" date="2000" name="Genome Res.">
        <title>The genomic region encompassing the nephropathic cystinosis gene (CTNS): complete sequencing of a 200-kb segment and discovery of a novel gene within the common cystinosis-causing deletion.</title>
        <authorList>
            <person name="Touchman J.W."/>
            <person name="Anikster Y."/>
            <person name="Dietrich N.L."/>
            <person name="Maduro V.V.B."/>
            <person name="McDowell G."/>
            <person name="Shotelersuk V."/>
            <person name="Bouffard G.G."/>
            <person name="Beckstrom-Sternberg S.M."/>
            <person name="Gahl W.A."/>
            <person name="Green E.D."/>
        </authorList>
    </citation>
    <scope>NUCLEOTIDE SEQUENCE [GENOMIC DNA]</scope>
</reference>
<reference key="4">
    <citation type="submission" date="1998-06" db="EMBL/GenBank/DDBJ databases">
        <authorList>
            <person name="Yu W."/>
            <person name="Gibbs R.A."/>
        </authorList>
    </citation>
    <scope>NUCLEOTIDE SEQUENCE [LARGE SCALE MRNA] (ISOFORM 3)</scope>
    <source>
        <tissue>Brain</tissue>
    </source>
</reference>
<reference key="5">
    <citation type="submission" date="2005-10" db="EMBL/GenBank/DDBJ databases">
        <authorList>
            <person name="Li H."/>
            <person name="Nong W."/>
            <person name="Zhou G."/>
            <person name="Ke R."/>
            <person name="Shen C."/>
            <person name="Zhong G."/>
            <person name="Zheng Z."/>
            <person name="Liang M."/>
            <person name="Tang Z."/>
            <person name="Huang B."/>
            <person name="Lin L."/>
            <person name="Yang S."/>
        </authorList>
    </citation>
    <scope>NUCLEOTIDE SEQUENCE [MRNA] (ISOFORM 5)</scope>
</reference>
<reference key="6">
    <citation type="journal article" date="2004" name="Nat. Genet.">
        <title>Complete sequencing and characterization of 21,243 full-length human cDNAs.</title>
        <authorList>
            <person name="Ota T."/>
            <person name="Suzuki Y."/>
            <person name="Nishikawa T."/>
            <person name="Otsuki T."/>
            <person name="Sugiyama T."/>
            <person name="Irie R."/>
            <person name="Wakamatsu A."/>
            <person name="Hayashi K."/>
            <person name="Sato H."/>
            <person name="Nagai K."/>
            <person name="Kimura K."/>
            <person name="Makita H."/>
            <person name="Sekine M."/>
            <person name="Obayashi M."/>
            <person name="Nishi T."/>
            <person name="Shibahara T."/>
            <person name="Tanaka T."/>
            <person name="Ishii S."/>
            <person name="Yamamoto J."/>
            <person name="Saito K."/>
            <person name="Kawai Y."/>
            <person name="Isono Y."/>
            <person name="Nakamura Y."/>
            <person name="Nagahari K."/>
            <person name="Murakami K."/>
            <person name="Yasuda T."/>
            <person name="Iwayanagi T."/>
            <person name="Wagatsuma M."/>
            <person name="Shiratori A."/>
            <person name="Sudo H."/>
            <person name="Hosoiri T."/>
            <person name="Kaku Y."/>
            <person name="Kodaira H."/>
            <person name="Kondo H."/>
            <person name="Sugawara M."/>
            <person name="Takahashi M."/>
            <person name="Kanda K."/>
            <person name="Yokoi T."/>
            <person name="Furuya T."/>
            <person name="Kikkawa E."/>
            <person name="Omura Y."/>
            <person name="Abe K."/>
            <person name="Kamihara K."/>
            <person name="Katsuta N."/>
            <person name="Sato K."/>
            <person name="Tanikawa M."/>
            <person name="Yamazaki M."/>
            <person name="Ninomiya K."/>
            <person name="Ishibashi T."/>
            <person name="Yamashita H."/>
            <person name="Murakawa K."/>
            <person name="Fujimori K."/>
            <person name="Tanai H."/>
            <person name="Kimata M."/>
            <person name="Watanabe M."/>
            <person name="Hiraoka S."/>
            <person name="Chiba Y."/>
            <person name="Ishida S."/>
            <person name="Ono Y."/>
            <person name="Takiguchi S."/>
            <person name="Watanabe S."/>
            <person name="Yosida M."/>
            <person name="Hotuta T."/>
            <person name="Kusano J."/>
            <person name="Kanehori K."/>
            <person name="Takahashi-Fujii A."/>
            <person name="Hara H."/>
            <person name="Tanase T.-O."/>
            <person name="Nomura Y."/>
            <person name="Togiya S."/>
            <person name="Komai F."/>
            <person name="Hara R."/>
            <person name="Takeuchi K."/>
            <person name="Arita M."/>
            <person name="Imose N."/>
            <person name="Musashino K."/>
            <person name="Yuuki H."/>
            <person name="Oshima A."/>
            <person name="Sasaki N."/>
            <person name="Aotsuka S."/>
            <person name="Yoshikawa Y."/>
            <person name="Matsunawa H."/>
            <person name="Ichihara T."/>
            <person name="Shiohata N."/>
            <person name="Sano S."/>
            <person name="Moriya S."/>
            <person name="Momiyama H."/>
            <person name="Satoh N."/>
            <person name="Takami S."/>
            <person name="Terashima Y."/>
            <person name="Suzuki O."/>
            <person name="Nakagawa S."/>
            <person name="Senoh A."/>
            <person name="Mizoguchi H."/>
            <person name="Goto Y."/>
            <person name="Shimizu F."/>
            <person name="Wakebe H."/>
            <person name="Hishigaki H."/>
            <person name="Watanabe T."/>
            <person name="Sugiyama A."/>
            <person name="Takemoto M."/>
            <person name="Kawakami B."/>
            <person name="Yamazaki M."/>
            <person name="Watanabe K."/>
            <person name="Kumagai A."/>
            <person name="Itakura S."/>
            <person name="Fukuzumi Y."/>
            <person name="Fujimori Y."/>
            <person name="Komiyama M."/>
            <person name="Tashiro H."/>
            <person name="Tanigami A."/>
            <person name="Fujiwara T."/>
            <person name="Ono T."/>
            <person name="Yamada K."/>
            <person name="Fujii Y."/>
            <person name="Ozaki K."/>
            <person name="Hirao M."/>
            <person name="Ohmori Y."/>
            <person name="Kawabata A."/>
            <person name="Hikiji T."/>
            <person name="Kobatake N."/>
            <person name="Inagaki H."/>
            <person name="Ikema Y."/>
            <person name="Okamoto S."/>
            <person name="Okitani R."/>
            <person name="Kawakami T."/>
            <person name="Noguchi S."/>
            <person name="Itoh T."/>
            <person name="Shigeta K."/>
            <person name="Senba T."/>
            <person name="Matsumura K."/>
            <person name="Nakajima Y."/>
            <person name="Mizuno T."/>
            <person name="Morinaga M."/>
            <person name="Sasaki M."/>
            <person name="Togashi T."/>
            <person name="Oyama M."/>
            <person name="Hata H."/>
            <person name="Watanabe M."/>
            <person name="Komatsu T."/>
            <person name="Mizushima-Sugano J."/>
            <person name="Satoh T."/>
            <person name="Shirai Y."/>
            <person name="Takahashi Y."/>
            <person name="Nakagawa K."/>
            <person name="Okumura K."/>
            <person name="Nagase T."/>
            <person name="Nomura N."/>
            <person name="Kikuchi H."/>
            <person name="Masuho Y."/>
            <person name="Yamashita R."/>
            <person name="Nakai K."/>
            <person name="Yada T."/>
            <person name="Nakamura Y."/>
            <person name="Ohara O."/>
            <person name="Isogai T."/>
            <person name="Sugano S."/>
        </authorList>
    </citation>
    <scope>NUCLEOTIDE SEQUENCE [LARGE SCALE MRNA] (ISOFORM 1)</scope>
    <source>
        <tissue>Erythroleukemia</tissue>
        <tissue>Mesangial cell</tissue>
    </source>
</reference>
<reference key="7">
    <citation type="submission" date="2005-03" db="EMBL/GenBank/DDBJ databases">
        <authorList>
            <person name="Totoki Y."/>
            <person name="Toyoda A."/>
            <person name="Takeda T."/>
            <person name="Sakaki Y."/>
            <person name="Tanaka A."/>
            <person name="Yokoyama S."/>
            <person name="Ohara O."/>
            <person name="Nagase T."/>
            <person name="Kikuno R.F."/>
        </authorList>
    </citation>
    <scope>NUCLEOTIDE SEQUENCE [LARGE SCALE MRNA] (ISOFORM 4)</scope>
    <source>
        <tissue>Spleen</tissue>
    </source>
</reference>
<reference key="8">
    <citation type="journal article" date="2006" name="Nature">
        <title>DNA sequence of human chromosome 17 and analysis of rearrangement in the human lineage.</title>
        <authorList>
            <person name="Zody M.C."/>
            <person name="Garber M."/>
            <person name="Adams D.J."/>
            <person name="Sharpe T."/>
            <person name="Harrow J."/>
            <person name="Lupski J.R."/>
            <person name="Nicholson C."/>
            <person name="Searle S.M."/>
            <person name="Wilming L."/>
            <person name="Young S.K."/>
            <person name="Abouelleil A."/>
            <person name="Allen N.R."/>
            <person name="Bi W."/>
            <person name="Bloom T."/>
            <person name="Borowsky M.L."/>
            <person name="Bugalter B.E."/>
            <person name="Butler J."/>
            <person name="Chang J.L."/>
            <person name="Chen C.-K."/>
            <person name="Cook A."/>
            <person name="Corum B."/>
            <person name="Cuomo C.A."/>
            <person name="de Jong P.J."/>
            <person name="DeCaprio D."/>
            <person name="Dewar K."/>
            <person name="FitzGerald M."/>
            <person name="Gilbert J."/>
            <person name="Gibson R."/>
            <person name="Gnerre S."/>
            <person name="Goldstein S."/>
            <person name="Grafham D.V."/>
            <person name="Grocock R."/>
            <person name="Hafez N."/>
            <person name="Hagopian D.S."/>
            <person name="Hart E."/>
            <person name="Norman C.H."/>
            <person name="Humphray S."/>
            <person name="Jaffe D.B."/>
            <person name="Jones M."/>
            <person name="Kamal M."/>
            <person name="Khodiyar V.K."/>
            <person name="LaButti K."/>
            <person name="Laird G."/>
            <person name="Lehoczky J."/>
            <person name="Liu X."/>
            <person name="Lokyitsang T."/>
            <person name="Loveland J."/>
            <person name="Lui A."/>
            <person name="Macdonald P."/>
            <person name="Major J.E."/>
            <person name="Matthews L."/>
            <person name="Mauceli E."/>
            <person name="McCarroll S.A."/>
            <person name="Mihalev A.H."/>
            <person name="Mudge J."/>
            <person name="Nguyen C."/>
            <person name="Nicol R."/>
            <person name="O'Leary S.B."/>
            <person name="Osoegawa K."/>
            <person name="Schwartz D.C."/>
            <person name="Shaw-Smith C."/>
            <person name="Stankiewicz P."/>
            <person name="Steward C."/>
            <person name="Swarbreck D."/>
            <person name="Venkataraman V."/>
            <person name="Whittaker C.A."/>
            <person name="Yang X."/>
            <person name="Zimmer A.R."/>
            <person name="Bradley A."/>
            <person name="Hubbard T."/>
            <person name="Birren B.W."/>
            <person name="Rogers J."/>
            <person name="Lander E.S."/>
            <person name="Nusbaum C."/>
        </authorList>
    </citation>
    <scope>NUCLEOTIDE SEQUENCE [LARGE SCALE GENOMIC DNA]</scope>
</reference>
<reference key="9">
    <citation type="submission" date="2005-09" db="EMBL/GenBank/DDBJ databases">
        <authorList>
            <person name="Mural R.J."/>
            <person name="Istrail S."/>
            <person name="Sutton G."/>
            <person name="Florea L."/>
            <person name="Halpern A.L."/>
            <person name="Mobarry C.M."/>
            <person name="Lippert R."/>
            <person name="Walenz B."/>
            <person name="Shatkay H."/>
            <person name="Dew I."/>
            <person name="Miller J.R."/>
            <person name="Flanigan M.J."/>
            <person name="Edwards N.J."/>
            <person name="Bolanos R."/>
            <person name="Fasulo D."/>
            <person name="Halldorsson B.V."/>
            <person name="Hannenhalli S."/>
            <person name="Turner R."/>
            <person name="Yooseph S."/>
            <person name="Lu F."/>
            <person name="Nusskern D.R."/>
            <person name="Shue B.C."/>
            <person name="Zheng X.H."/>
            <person name="Zhong F."/>
            <person name="Delcher A.L."/>
            <person name="Huson D.H."/>
            <person name="Kravitz S.A."/>
            <person name="Mouchard L."/>
            <person name="Reinert K."/>
            <person name="Remington K.A."/>
            <person name="Clark A.G."/>
            <person name="Waterman M.S."/>
            <person name="Eichler E.E."/>
            <person name="Adams M.D."/>
            <person name="Hunkapiller M.W."/>
            <person name="Myers E.W."/>
            <person name="Venter J.C."/>
        </authorList>
    </citation>
    <scope>NUCLEOTIDE SEQUENCE [LARGE SCALE GENOMIC DNA]</scope>
</reference>
<reference key="10">
    <citation type="journal article" date="2004" name="Genome Res.">
        <title>The status, quality, and expansion of the NIH full-length cDNA project: the Mammalian Gene Collection (MGC).</title>
        <authorList>
            <consortium name="The MGC Project Team"/>
        </authorList>
    </citation>
    <scope>NUCLEOTIDE SEQUENCE [LARGE SCALE MRNA] (ISOFORMS 1 AND 2)</scope>
    <source>
        <tissue>Leukocyte</tissue>
        <tissue>Lung</tissue>
    </source>
</reference>
<reference key="11">
    <citation type="journal article" date="2003" name="Mol. Pharmacol.">
        <title>Pharmacological and biophysical properties of the human P2X5 receptor.</title>
        <authorList>
            <person name="Bo X."/>
            <person name="Jiang L.H."/>
            <person name="Wilson H.L."/>
            <person name="Kim M."/>
            <person name="Burnstock G."/>
            <person name="Surprenant A."/>
            <person name="North R.A."/>
        </authorList>
    </citation>
    <scope>FUNCTION (ISOFORM 6)</scope>
    <scope>TRANSPORTER ACTIVITY (ISOFORM 6)</scope>
    <scope>ACTIVITY REGULATION (ISOFORM 6)</scope>
</reference>
<reference key="12">
    <citation type="journal article" date="2006" name="J. Biol. Chem.">
        <title>P2X5 subunit assembly requires scaffolding by the second transmembrane domain and a conserved aspartate.</title>
        <authorList>
            <person name="Duckwitz W."/>
            <person name="Hausmann R."/>
            <person name="Aschrafi A."/>
            <person name="Schmalzing G."/>
        </authorList>
    </citation>
    <scope>SUBUNIT</scope>
    <scope>DOMAIN</scope>
    <scope>SUBCELLULAR LOCATION</scope>
    <scope>MUTAGENESIS OF ASP-355</scope>
</reference>
<reference key="13">
    <citation type="journal article" date="2010" name="Mol. Pharmacol.">
        <title>Genetic and functional analysis of human P2X5 reveals a distinct pattern of exon 10 polymorphism with predominant expression of the nonfunctional receptor isoform.</title>
        <authorList>
            <person name="Kotnis S."/>
            <person name="Bingham B."/>
            <person name="Vasilyev D.V."/>
            <person name="Miller S.W."/>
            <person name="Bai Y."/>
            <person name="Yeola S."/>
            <person name="Chanda P.K."/>
            <person name="Bowlby M.R."/>
            <person name="Kaftan E.J."/>
            <person name="Samad T.A."/>
            <person name="Whiteside G.T."/>
        </authorList>
    </citation>
    <scope>POLYMORPHISM</scope>
    <scope>SUBCELLULAR LOCATION</scope>
</reference>
<proteinExistence type="evidence at protein level"/>
<dbReference type="EMBL" id="U49395">
    <property type="protein sequence ID" value="AAB08576.1"/>
    <property type="molecule type" value="mRNA"/>
</dbReference>
<dbReference type="EMBL" id="U49396">
    <property type="protein sequence ID" value="AAB08577.1"/>
    <property type="molecule type" value="mRNA"/>
</dbReference>
<dbReference type="EMBL" id="AF016709">
    <property type="protein sequence ID" value="AAC51931.1"/>
    <property type="molecule type" value="mRNA"/>
</dbReference>
<dbReference type="EMBL" id="AF168787">
    <property type="protein sequence ID" value="AAF43105.1"/>
    <property type="molecule type" value="Genomic_DNA"/>
</dbReference>
<dbReference type="EMBL" id="AF168787">
    <property type="protein sequence ID" value="AAF43106.1"/>
    <property type="status" value="ALT_SEQ"/>
    <property type="molecule type" value="Genomic_DNA"/>
</dbReference>
<dbReference type="EMBL" id="AF070573">
    <property type="protein sequence ID" value="AAC28645.1"/>
    <property type="molecule type" value="mRNA"/>
</dbReference>
<dbReference type="EMBL" id="DQ234349">
    <property type="protein sequence ID" value="ABB29978.1"/>
    <property type="molecule type" value="mRNA"/>
</dbReference>
<dbReference type="EMBL" id="AK290889">
    <property type="protein sequence ID" value="BAF83578.1"/>
    <property type="molecule type" value="mRNA"/>
</dbReference>
<dbReference type="EMBL" id="AK307959">
    <property type="status" value="NOT_ANNOTATED_CDS"/>
    <property type="molecule type" value="mRNA"/>
</dbReference>
<dbReference type="EMBL" id="AB209623">
    <property type="protein sequence ID" value="BAD92860.1"/>
    <property type="status" value="ALT_FRAME"/>
    <property type="molecule type" value="mRNA"/>
</dbReference>
<dbReference type="EMBL" id="AC132942">
    <property type="status" value="NOT_ANNOTATED_CDS"/>
    <property type="molecule type" value="Genomic_DNA"/>
</dbReference>
<dbReference type="EMBL" id="KF456229">
    <property type="status" value="NOT_ANNOTATED_CDS"/>
    <property type="molecule type" value="Genomic_DNA"/>
</dbReference>
<dbReference type="EMBL" id="CH471108">
    <property type="protein sequence ID" value="EAW90483.1"/>
    <property type="molecule type" value="Genomic_DNA"/>
</dbReference>
<dbReference type="EMBL" id="BC028084">
    <property type="status" value="NOT_ANNOTATED_CDS"/>
    <property type="molecule type" value="mRNA"/>
</dbReference>
<dbReference type="EMBL" id="BC039015">
    <property type="protein sequence ID" value="AAH39015.1"/>
    <property type="molecule type" value="mRNA"/>
</dbReference>
<dbReference type="CCDS" id="CCDS11034.1">
    <molecule id="Q93086-3"/>
</dbReference>
<dbReference type="CCDS" id="CCDS11035.1">
    <molecule id="Q93086-2"/>
</dbReference>
<dbReference type="CCDS" id="CCDS56014.1">
    <molecule id="Q93086-5"/>
</dbReference>
<dbReference type="CCDS" id="CCDS56015.1">
    <molecule id="Q93086-1"/>
</dbReference>
<dbReference type="RefSeq" id="NP_001191448.1">
    <molecule id="Q93086-1"/>
    <property type="nucleotide sequence ID" value="NM_001204519.2"/>
</dbReference>
<dbReference type="RefSeq" id="NP_001191449.1">
    <molecule id="Q93086-5"/>
    <property type="nucleotide sequence ID" value="NM_001204520.2"/>
</dbReference>
<dbReference type="RefSeq" id="NP_002552.2">
    <molecule id="Q93086-3"/>
    <property type="nucleotide sequence ID" value="NM_002561.3"/>
</dbReference>
<dbReference type="RefSeq" id="NP_778255.1">
    <molecule id="Q93086-2"/>
    <property type="nucleotide sequence ID" value="NM_175080.3"/>
</dbReference>
<dbReference type="SMR" id="Q93086"/>
<dbReference type="BioGRID" id="111065">
    <property type="interactions" value="71"/>
</dbReference>
<dbReference type="FunCoup" id="Q93086">
    <property type="interactions" value="765"/>
</dbReference>
<dbReference type="IntAct" id="Q93086">
    <property type="interactions" value="30"/>
</dbReference>
<dbReference type="STRING" id="9606.ENSP00000225328"/>
<dbReference type="BindingDB" id="Q93086"/>
<dbReference type="ChEMBL" id="CHEMBL4942"/>
<dbReference type="DrugBank" id="DB01069">
    <property type="generic name" value="Promethazine"/>
</dbReference>
<dbReference type="TCDB" id="1.A.7.1.11">
    <property type="family name" value="the atp-gated p2x receptor cation channel (p2x receptor) family"/>
</dbReference>
<dbReference type="GlyCosmos" id="Q93086">
    <property type="glycosylation" value="2 sites, No reported glycans"/>
</dbReference>
<dbReference type="GlyGen" id="Q93086">
    <property type="glycosylation" value="2 sites, 2 N-linked glycans (1 site)"/>
</dbReference>
<dbReference type="iPTMnet" id="Q93086"/>
<dbReference type="PhosphoSitePlus" id="Q93086"/>
<dbReference type="BioMuta" id="P2RX5"/>
<dbReference type="DMDM" id="209572778"/>
<dbReference type="jPOST" id="Q93086"/>
<dbReference type="MassIVE" id="Q93086"/>
<dbReference type="PaxDb" id="9606-ENSP00000225328"/>
<dbReference type="PeptideAtlas" id="Q93086"/>
<dbReference type="ProteomicsDB" id="33860"/>
<dbReference type="ProteomicsDB" id="75715">
    <molecule id="Q93086-3"/>
</dbReference>
<dbReference type="ProteomicsDB" id="75716">
    <molecule id="Q93086-1"/>
</dbReference>
<dbReference type="ProteomicsDB" id="75717">
    <molecule id="Q93086-2"/>
</dbReference>
<dbReference type="ProteomicsDB" id="75718">
    <molecule id="Q93086-4"/>
</dbReference>
<dbReference type="Antibodypedia" id="10941">
    <property type="antibodies" value="215 antibodies from 27 providers"/>
</dbReference>
<dbReference type="DNASU" id="5026"/>
<dbReference type="Ensembl" id="ENST00000225328.10">
    <molecule id="Q93086-3"/>
    <property type="protein sequence ID" value="ENSP00000225328.5"/>
    <property type="gene ID" value="ENSG00000083454.23"/>
</dbReference>
<dbReference type="Ensembl" id="ENST00000345901.7">
    <molecule id="Q93086-5"/>
    <property type="protein sequence ID" value="ENSP00000342161.3"/>
    <property type="gene ID" value="ENSG00000083454.23"/>
</dbReference>
<dbReference type="Ensembl" id="ENST00000547178.5">
    <molecule id="Q93086-1"/>
    <property type="protein sequence ID" value="ENSP00000448355.1"/>
    <property type="gene ID" value="ENSG00000083454.23"/>
</dbReference>
<dbReference type="Ensembl" id="ENST00000551178.5">
    <molecule id="Q93086-2"/>
    <property type="protein sequence ID" value="ENSP00000447545.1"/>
    <property type="gene ID" value="ENSG00000083454.23"/>
</dbReference>
<dbReference type="Ensembl" id="ENST00000697413.1">
    <molecule id="Q93086-6"/>
    <property type="protein sequence ID" value="ENSP00000513301.1"/>
    <property type="gene ID" value="ENSG00000083454.23"/>
</dbReference>
<dbReference type="GeneID" id="5026"/>
<dbReference type="KEGG" id="hsa:5026"/>
<dbReference type="MANE-Select" id="ENST00000225328.10">
    <molecule id="Q93086-3"/>
    <property type="protein sequence ID" value="ENSP00000225328.5"/>
    <property type="RefSeq nucleotide sequence ID" value="NM_002561.4"/>
    <property type="RefSeq protein sequence ID" value="NP_002552.2"/>
</dbReference>
<dbReference type="UCSC" id="uc002fwi.4">
    <molecule id="Q93086-6"/>
    <property type="organism name" value="human"/>
</dbReference>
<dbReference type="AGR" id="HGNC:8536"/>
<dbReference type="CTD" id="5026"/>
<dbReference type="DisGeNET" id="5026"/>
<dbReference type="GeneCards" id="P2RX5"/>
<dbReference type="HGNC" id="HGNC:8536">
    <property type="gene designation" value="P2RX5"/>
</dbReference>
<dbReference type="HPA" id="ENSG00000083454">
    <property type="expression patterns" value="Tissue enhanced (intestine, lymphoid tissue)"/>
</dbReference>
<dbReference type="MIM" id="602836">
    <property type="type" value="gene"/>
</dbReference>
<dbReference type="neXtProt" id="NX_Q93086"/>
<dbReference type="OpenTargets" id="ENSG00000083454"/>
<dbReference type="PharmGKB" id="PA32865"/>
<dbReference type="VEuPathDB" id="HostDB:ENSG00000083454"/>
<dbReference type="eggNOG" id="ENOG502QSUI">
    <property type="taxonomic scope" value="Eukaryota"/>
</dbReference>
<dbReference type="GeneTree" id="ENSGT01020000230351"/>
<dbReference type="InParanoid" id="Q93086"/>
<dbReference type="OMA" id="GIHIEWN"/>
<dbReference type="OrthoDB" id="494673at2759"/>
<dbReference type="PAN-GO" id="Q93086">
    <property type="GO annotations" value="2 GO annotations based on evolutionary models"/>
</dbReference>
<dbReference type="PhylomeDB" id="Q93086"/>
<dbReference type="TreeFam" id="TF328633"/>
<dbReference type="PathwayCommons" id="Q93086"/>
<dbReference type="Reactome" id="R-HSA-139853">
    <property type="pathway name" value="Elevation of cytosolic Ca2+ levels"/>
</dbReference>
<dbReference type="Reactome" id="R-HSA-418346">
    <property type="pathway name" value="Platelet homeostasis"/>
</dbReference>
<dbReference type="SignaLink" id="Q93086"/>
<dbReference type="BioGRID-ORCS" id="5026">
    <property type="hits" value="18 hits in 1148 CRISPR screens"/>
</dbReference>
<dbReference type="GeneWiki" id="P2RX5"/>
<dbReference type="GenomeRNAi" id="5026"/>
<dbReference type="Pharos" id="Q93086">
    <property type="development level" value="Tchem"/>
</dbReference>
<dbReference type="PRO" id="PR:Q93086"/>
<dbReference type="Proteomes" id="UP000005640">
    <property type="component" value="Chromosome 17"/>
</dbReference>
<dbReference type="RNAct" id="Q93086">
    <property type="molecule type" value="protein"/>
</dbReference>
<dbReference type="Bgee" id="ENSG00000083454">
    <property type="expression patterns" value="Expressed in spleen and 143 other cell types or tissues"/>
</dbReference>
<dbReference type="ExpressionAtlas" id="Q93086">
    <property type="expression patterns" value="baseline and differential"/>
</dbReference>
<dbReference type="GO" id="GO:0005886">
    <property type="term" value="C:plasma membrane"/>
    <property type="evidence" value="ECO:0000314"/>
    <property type="project" value="UniProtKB"/>
</dbReference>
<dbReference type="GO" id="GO:0098794">
    <property type="term" value="C:postsynapse"/>
    <property type="evidence" value="ECO:0007669"/>
    <property type="project" value="GOC"/>
</dbReference>
<dbReference type="GO" id="GO:0005524">
    <property type="term" value="F:ATP binding"/>
    <property type="evidence" value="ECO:0000303"/>
    <property type="project" value="BHF-UCL"/>
</dbReference>
<dbReference type="GO" id="GO:0035381">
    <property type="term" value="F:ATP-gated ion channel activity"/>
    <property type="evidence" value="ECO:0000314"/>
    <property type="project" value="UniProtKB"/>
</dbReference>
<dbReference type="GO" id="GO:0004931">
    <property type="term" value="F:extracellularly ATP-gated monoatomic cation channel activity"/>
    <property type="evidence" value="ECO:0000318"/>
    <property type="project" value="GO_Central"/>
</dbReference>
<dbReference type="GO" id="GO:0042802">
    <property type="term" value="F:identical protein binding"/>
    <property type="evidence" value="ECO:0007669"/>
    <property type="project" value="Ensembl"/>
</dbReference>
<dbReference type="GO" id="GO:0099095">
    <property type="term" value="F:ligand-gated monoatomic anion channel activity"/>
    <property type="evidence" value="ECO:0000314"/>
    <property type="project" value="UniProtKB"/>
</dbReference>
<dbReference type="GO" id="GO:0005216">
    <property type="term" value="F:monoatomic ion channel activity"/>
    <property type="evidence" value="ECO:0000304"/>
    <property type="project" value="ProtInc"/>
</dbReference>
<dbReference type="GO" id="GO:0001614">
    <property type="term" value="F:purinergic nucleotide receptor activity"/>
    <property type="evidence" value="ECO:0000303"/>
    <property type="project" value="BHF-UCL"/>
</dbReference>
<dbReference type="GO" id="GO:0004888">
    <property type="term" value="F:transmembrane signaling receptor activity"/>
    <property type="evidence" value="ECO:0000304"/>
    <property type="project" value="ProtInc"/>
</dbReference>
<dbReference type="GO" id="GO:0005244">
    <property type="term" value="F:voltage-gated monoatomic ion channel activity"/>
    <property type="evidence" value="ECO:0007669"/>
    <property type="project" value="Ensembl"/>
</dbReference>
<dbReference type="GO" id="GO:0070588">
    <property type="term" value="P:calcium ion transmembrane transport"/>
    <property type="evidence" value="ECO:0000318"/>
    <property type="project" value="GO_Central"/>
</dbReference>
<dbReference type="GO" id="GO:0006821">
    <property type="term" value="P:chloride transport"/>
    <property type="evidence" value="ECO:0000314"/>
    <property type="project" value="UniProtKB"/>
</dbReference>
<dbReference type="GO" id="GO:0007399">
    <property type="term" value="P:nervous system development"/>
    <property type="evidence" value="ECO:0000304"/>
    <property type="project" value="ProtInc"/>
</dbReference>
<dbReference type="GO" id="GO:0036179">
    <property type="term" value="P:osteoclast maturation"/>
    <property type="evidence" value="ECO:0000250"/>
    <property type="project" value="UniProtKB"/>
</dbReference>
<dbReference type="GO" id="GO:1905665">
    <property type="term" value="P:positive regulation of calcium ion import across plasma membrane"/>
    <property type="evidence" value="ECO:0007669"/>
    <property type="project" value="Ensembl"/>
</dbReference>
<dbReference type="GO" id="GO:0010524">
    <property type="term" value="P:positive regulation of calcium ion transport into cytosol"/>
    <property type="evidence" value="ECO:0000303"/>
    <property type="project" value="BHF-UCL"/>
</dbReference>
<dbReference type="GO" id="GO:0050850">
    <property type="term" value="P:positive regulation of calcium-mediated signaling"/>
    <property type="evidence" value="ECO:0000303"/>
    <property type="project" value="BHF-UCL"/>
</dbReference>
<dbReference type="GO" id="GO:0043416">
    <property type="term" value="P:regulation of skeletal muscle tissue regeneration"/>
    <property type="evidence" value="ECO:0007669"/>
    <property type="project" value="Ensembl"/>
</dbReference>
<dbReference type="GO" id="GO:0033198">
    <property type="term" value="P:response to ATP"/>
    <property type="evidence" value="ECO:0007669"/>
    <property type="project" value="Ensembl"/>
</dbReference>
<dbReference type="GO" id="GO:0051592">
    <property type="term" value="P:response to calcium ion"/>
    <property type="evidence" value="ECO:0007669"/>
    <property type="project" value="Ensembl"/>
</dbReference>
<dbReference type="GO" id="GO:0009268">
    <property type="term" value="P:response to pH"/>
    <property type="evidence" value="ECO:0007669"/>
    <property type="project" value="Ensembl"/>
</dbReference>
<dbReference type="GO" id="GO:0010043">
    <property type="term" value="P:response to zinc ion"/>
    <property type="evidence" value="ECO:0007669"/>
    <property type="project" value="Ensembl"/>
</dbReference>
<dbReference type="GO" id="GO:0007165">
    <property type="term" value="P:signal transduction"/>
    <property type="evidence" value="ECO:0000304"/>
    <property type="project" value="ProtInc"/>
</dbReference>
<dbReference type="FunFam" id="1.10.287.940:FF:000005">
    <property type="entry name" value="P2X purinoceptor"/>
    <property type="match status" value="1"/>
</dbReference>
<dbReference type="FunFam" id="2.60.490.10:FF:000001">
    <property type="entry name" value="P2X purinoceptor"/>
    <property type="match status" value="1"/>
</dbReference>
<dbReference type="Gene3D" id="1.10.287.940">
    <property type="entry name" value="atp-gated p2x4 ion channel"/>
    <property type="match status" value="1"/>
</dbReference>
<dbReference type="Gene3D" id="2.60.490.10">
    <property type="entry name" value="atp-gated p2x4 ion channel domain"/>
    <property type="match status" value="1"/>
</dbReference>
<dbReference type="InterPro" id="IPR003048">
    <property type="entry name" value="P2X5_purnocptor"/>
</dbReference>
<dbReference type="InterPro" id="IPR027309">
    <property type="entry name" value="P2X_extracellular_dom_sf"/>
</dbReference>
<dbReference type="InterPro" id="IPR001429">
    <property type="entry name" value="P2X_purnocptor"/>
</dbReference>
<dbReference type="InterPro" id="IPR053792">
    <property type="entry name" value="P2X_RECEPTOR_CS"/>
</dbReference>
<dbReference type="NCBIfam" id="TIGR00863">
    <property type="entry name" value="P2X"/>
    <property type="match status" value="1"/>
</dbReference>
<dbReference type="PANTHER" id="PTHR10125">
    <property type="entry name" value="P2X PURINOCEPTOR"/>
    <property type="match status" value="1"/>
</dbReference>
<dbReference type="PANTHER" id="PTHR10125:SF12">
    <property type="entry name" value="P2X PURINOCEPTOR 5"/>
    <property type="match status" value="1"/>
</dbReference>
<dbReference type="Pfam" id="PF00864">
    <property type="entry name" value="P2X_receptor"/>
    <property type="match status" value="1"/>
</dbReference>
<dbReference type="PIRSF" id="PIRSF005713">
    <property type="entry name" value="P2X_purinoceptor"/>
    <property type="match status" value="1"/>
</dbReference>
<dbReference type="PRINTS" id="PR01312">
    <property type="entry name" value="P2X5RECEPTOR"/>
</dbReference>
<dbReference type="PRINTS" id="PR01307">
    <property type="entry name" value="P2XRECEPTOR"/>
</dbReference>
<dbReference type="PROSITE" id="PS01212">
    <property type="entry name" value="P2X_RECEPTOR"/>
    <property type="match status" value="1"/>
</dbReference>
<keyword id="KW-0025">Alternative splicing</keyword>
<keyword id="KW-1003">Cell membrane</keyword>
<keyword id="KW-1015">Disulfide bond</keyword>
<keyword id="KW-0325">Glycoprotein</keyword>
<keyword id="KW-0407">Ion channel</keyword>
<keyword id="KW-0406">Ion transport</keyword>
<keyword id="KW-1071">Ligand-gated ion channel</keyword>
<keyword id="KW-0472">Membrane</keyword>
<keyword id="KW-1267">Proteomics identification</keyword>
<keyword id="KW-0675">Receptor</keyword>
<keyword id="KW-1185">Reference proteome</keyword>
<keyword id="KW-0812">Transmembrane</keyword>
<keyword id="KW-1133">Transmembrane helix</keyword>
<keyword id="KW-0813">Transport</keyword>
<accession>Q93086</accession>
<accession>A0A8V8TLD3</accession>
<accession>G5E981</accession>
<accession>O43450</accession>
<accession>O75540</accession>
<accession>Q308M5</accession>
<accession>Q59F38</accession>
<accession>Q8IXW4</accession>
<accession>Q93087</accession>
<accession>Q9NZV0</accession>
<feature type="chain" id="PRO_0000161555" description="P2X purinoceptor 5">
    <location>
        <begin position="1"/>
        <end position="444"/>
    </location>
</feature>
<feature type="topological domain" description="Cytoplasmic" evidence="11">
    <location>
        <begin position="1"/>
        <end position="30"/>
    </location>
</feature>
<feature type="transmembrane region" description="Helical; Name=1" evidence="2">
    <location>
        <begin position="31"/>
        <end position="51"/>
    </location>
</feature>
<feature type="topological domain" description="Extracellular" evidence="11">
    <location>
        <begin position="52"/>
        <end position="319"/>
    </location>
</feature>
<feature type="transmembrane region" description="Helical; Name=2" evidence="2">
    <location>
        <begin position="320"/>
        <end position="362"/>
    </location>
</feature>
<feature type="topological domain" description="Cytoplasmic" evidence="11">
    <location>
        <begin position="363"/>
        <end position="444"/>
    </location>
</feature>
<feature type="region of interest" description="Disordered" evidence="5">
    <location>
        <begin position="378"/>
        <end position="444"/>
    </location>
</feature>
<feature type="glycosylation site" description="N-linked (GlcNAc...) asparagine" evidence="4">
    <location>
        <position position="77"/>
    </location>
</feature>
<feature type="glycosylation site" description="N-linked (GlcNAc...) asparagine" evidence="4">
    <location>
        <position position="202"/>
    </location>
</feature>
<feature type="disulfide bond" evidence="2">
    <location>
        <begin position="118"/>
        <end position="169"/>
    </location>
</feature>
<feature type="disulfide bond" evidence="2">
    <location>
        <begin position="129"/>
        <end position="152"/>
    </location>
</feature>
<feature type="disulfide bond" evidence="2">
    <location>
        <begin position="135"/>
        <end position="163"/>
    </location>
</feature>
<feature type="disulfide bond" evidence="2">
    <location>
        <begin position="220"/>
        <end position="229"/>
    </location>
</feature>
<feature type="disulfide bond" evidence="2">
    <location>
        <begin position="263"/>
        <end position="272"/>
    </location>
</feature>
<feature type="splice variant" id="VSP_062292" description="In isoform 3 and isoform 5.">
    <location>
        <begin position="97"/>
        <end position="120"/>
    </location>
</feature>
<feature type="splice variant" id="VSP_062293" description="In isoform 3 and isoform 2.">
    <original>KS</original>
    <variation>N</variation>
    <location>
        <begin position="205"/>
        <end position="206"/>
    </location>
</feature>
<feature type="splice variant" id="VSP_062294" description="In isoform 1, isoform 2, isoform 3, isoform 4 and isoform 5.">
    <location>
        <begin position="328"/>
        <end position="349"/>
    </location>
</feature>
<feature type="splice variant" id="VSP_062295" description="In isoform 4.">
    <original>ST</original>
    <variation>LRTPSASPLHQE</variation>
    <location>
        <begin position="443"/>
        <end position="444"/>
    </location>
</feature>
<feature type="mutagenesis site" description="Impairs homotrimerization." evidence="7">
    <original>D</original>
    <variation>L</variation>
    <location>
        <position position="355"/>
    </location>
</feature>
<feature type="sequence conflict" description="In Ref. 1; AAB08577." evidence="11" ref="1">
    <original>Q</original>
    <variation>E</variation>
    <location>
        <position position="96"/>
    </location>
</feature>
<feature type="sequence conflict" description="In Ref. 1; AAB08576." evidence="11" ref="1">
    <original>GE</original>
    <variation>EK</variation>
    <location>
        <begin position="97"/>
        <end position="98"/>
    </location>
</feature>
<feature type="sequence conflict" description="In Ref. 2; AAC51931." evidence="11" ref="2">
    <original>E</original>
    <variation>G</variation>
    <location>
        <position position="156"/>
    </location>
</feature>
<feature type="sequence conflict" description="In Ref. 2; AAC51931." evidence="11" ref="2">
    <original>S</original>
    <variation>N</variation>
    <location>
        <position position="206"/>
    </location>
</feature>
<feature type="sequence conflict" description="In Ref. 2; AAC51931." evidence="11" ref="2">
    <original>VI</original>
    <variation>IV</variation>
    <location>
        <begin position="237"/>
        <end position="238"/>
    </location>
</feature>
<feature type="sequence conflict" description="In Ref. 2; AAC51931." evidence="11" ref="2">
    <original>E</original>
    <variation>R</variation>
    <location>
        <position position="251"/>
    </location>
</feature>
<feature type="sequence conflict" description="In Ref. 1; AAB08576/AAB08577." evidence="11" ref="1">
    <original>F</original>
    <variation>S</variation>
    <location>
        <position position="352"/>
    </location>
</feature>
<feature type="sequence conflict" description="In Ref. 5; ABB29978." evidence="11" ref="5">
    <original>K</original>
    <variation>R</variation>
    <location>
        <position position="372"/>
    </location>
</feature>
<feature type="sequence conflict" description="In Ref. 1; AAB08576/AAB08577." evidence="11" ref="1">
    <original>E</original>
    <variation>Q</variation>
    <location>
        <position position="374"/>
    </location>
</feature>
<feature type="sequence conflict" description="In Ref. 1; AAB08576/AAB08577." evidence="11" ref="1">
    <original>KR</original>
    <variation>NV</variation>
    <location>
        <begin position="421"/>
        <end position="422"/>
    </location>
</feature>
<evidence type="ECO:0000250" key="1">
    <source>
        <dbReference type="UniProtKB" id="P51578"/>
    </source>
</evidence>
<evidence type="ECO:0000250" key="2">
    <source>
        <dbReference type="UniProtKB" id="P56373"/>
    </source>
</evidence>
<evidence type="ECO:0000250" key="3">
    <source>
        <dbReference type="UniProtKB" id="Q91VE2"/>
    </source>
</evidence>
<evidence type="ECO:0000255" key="4"/>
<evidence type="ECO:0000256" key="5">
    <source>
        <dbReference type="SAM" id="MobiDB-lite"/>
    </source>
</evidence>
<evidence type="ECO:0000269" key="6">
    <source>
    </source>
</evidence>
<evidence type="ECO:0000269" key="7">
    <source>
    </source>
</evidence>
<evidence type="ECO:0000269" key="8">
    <source>
    </source>
</evidence>
<evidence type="ECO:0000269" key="9">
    <source>
    </source>
</evidence>
<evidence type="ECO:0000303" key="10">
    <source>
    </source>
</evidence>
<evidence type="ECO:0000305" key="11"/>
<evidence type="ECO:0000312" key="12">
    <source>
        <dbReference type="HGNC" id="HGNC:8536"/>
    </source>
</evidence>
<organism>
    <name type="scientific">Homo sapiens</name>
    <name type="common">Human</name>
    <dbReference type="NCBI Taxonomy" id="9606"/>
    <lineage>
        <taxon>Eukaryota</taxon>
        <taxon>Metazoa</taxon>
        <taxon>Chordata</taxon>
        <taxon>Craniata</taxon>
        <taxon>Vertebrata</taxon>
        <taxon>Euteleostomi</taxon>
        <taxon>Mammalia</taxon>
        <taxon>Eutheria</taxon>
        <taxon>Euarchontoglires</taxon>
        <taxon>Primates</taxon>
        <taxon>Haplorrhini</taxon>
        <taxon>Catarrhini</taxon>
        <taxon>Hominidae</taxon>
        <taxon>Homo</taxon>
    </lineage>
</organism>
<comment type="function">
    <molecule>Isoform 6</molecule>
    <text evidence="3 6">ATP-gated nonselective transmembrane cation channel permeable to potassium, sodium and calcium (PubMed:12761352). Unlike other P2RX receptors, the P2X5 receptor is also permeable to chloride (PubMed:12761352). May play a supporting role in the inflammatory response (By similarity).</text>
</comment>
<comment type="function">
    <molecule>Isoform 1</molecule>
    <text evidence="9">Non-functional.</text>
</comment>
<comment type="catalytic activity">
    <reaction evidence="6">
        <text>Na(+)(in) = Na(+)(out)</text>
        <dbReference type="Rhea" id="RHEA:34963"/>
        <dbReference type="ChEBI" id="CHEBI:29101"/>
    </reaction>
</comment>
<comment type="catalytic activity">
    <reaction evidence="6">
        <text>Ca(2+)(in) = Ca(2+)(out)</text>
        <dbReference type="Rhea" id="RHEA:29671"/>
        <dbReference type="ChEBI" id="CHEBI:29108"/>
    </reaction>
</comment>
<comment type="catalytic activity">
    <reaction evidence="6">
        <text>chloride(in) = chloride(out)</text>
        <dbReference type="Rhea" id="RHEA:29823"/>
        <dbReference type="ChEBI" id="CHEBI:17996"/>
    </reaction>
</comment>
<comment type="activity regulation">
    <text evidence="6">Activated by ATP (PubMed:12761352). Slowly desensitizing (PubMed:12761352). Sensitive to the ATP agonist alpha/beta-methylene-ATP (PubMed:12761352).</text>
</comment>
<comment type="subunit">
    <text evidence="1 7">Functional P2XRs are organized as homomeric and heteromeric trimers. Homotrimer (PubMed:17001079). Forms heterotrimer with P2RX1 (By similarity).</text>
</comment>
<comment type="subcellular location">
    <molecule>Isoform 6</molecule>
    <subcellularLocation>
        <location evidence="7 8">Cell membrane</location>
        <topology evidence="2">Multi-pass membrane protein</topology>
    </subcellularLocation>
    <text evidence="7">The absence of the exon 10-encoded amino acids substantially results in subunit aggregation and retention in the cell cytoplasm.</text>
</comment>
<comment type="alternative products">
    <event type="alternative splicing"/>
    <isoform>
        <id>Q93086-6</id>
        <name>6</name>
        <sequence type="displayed"/>
    </isoform>
    <isoform>
        <id>Q93086-3</id>
        <name>1</name>
        <sequence type="described" ref="VSP_062294"/>
    </isoform>
    <isoform>
        <id>Q93086-1</id>
        <name>2</name>
        <name>A</name>
        <sequence type="described" ref="VSP_062293 VSP_062294"/>
    </isoform>
    <isoform>
        <id>Q93086-2</id>
        <name>3</name>
        <name>B</name>
        <sequence type="described" ref="VSP_062292 VSP_062293 VSP_062294"/>
    </isoform>
    <isoform>
        <id>Q93086-4</id>
        <name>4</name>
        <sequence type="described" ref="VSP_062294 VSP_062295"/>
    </isoform>
    <isoform>
        <id>Q93086-5</id>
        <name>5</name>
        <sequence type="described" ref="VSP_062292 VSP_062294"/>
    </isoform>
</comment>
<comment type="tissue specificity">
    <text>Expressed at high levels in brain and immune system.</text>
</comment>
<comment type="domain">
    <text evidence="7">The second transmembrane domain and the conserved Asp-355 are essential for P2RX5 subunit assembly.</text>
</comment>
<comment type="polymorphism">
    <text evidence="8">A thymine (T) to guanine (G) nucleotide substitution at genomic position chr17:3688012 is very common in human populations. This SNP affects P2RX5 exon 10 splicing resulting in an apparently non-functional protein. This protein lacks the 22 amino acids encoded by exon 10, including parts of the ATP-binding domain and the second transmembrane domain, and is trimerization-defective. The sequence shown in this entry corresponds to the rarer, full length isoform (isoform 6) which is capable of assembling into a functional ATP-gated receptor channel.</text>
</comment>
<comment type="miscellaneous">
    <molecule>Isoform 1</molecule>
    <text evidence="9">Due to exon 10 skipping, this isoform is trimerization-defective and therefore unable to assemble into a functional ATP-gated receptor channel.</text>
</comment>
<comment type="similarity">
    <text evidence="11">Belongs to the P2X receptor family.</text>
</comment>
<comment type="sequence caution" evidence="11">
    <conflict type="erroneous gene model prediction">
        <sequence resource="EMBL-CDS" id="AAF43106"/>
    </conflict>
</comment>
<comment type="sequence caution" evidence="11">
    <conflict type="frameshift">
        <sequence resource="EMBL" id="AK307959"/>
    </conflict>
</comment>
<comment type="sequence caution" evidence="11">
    <conflict type="frameshift">
        <sequence resource="EMBL-CDS" id="BAD92860"/>
    </conflict>
</comment>
<comment type="sequence caution" evidence="11">
    <conflict type="frameshift">
        <sequence resource="EMBL" id="BC028084"/>
    </conflict>
</comment>
<comment type="online information" name="Wikipedia">
    <link uri="https://en.wikipedia.org/wiki/P2X_receptor"/>
    <text>P2X receptor entry</text>
</comment>
<protein>
    <recommendedName>
        <fullName>P2X purinoceptor 5</fullName>
        <shortName>P2X5</shortName>
    </recommendedName>
    <alternativeName>
        <fullName>ATP receptor</fullName>
    </alternativeName>
    <alternativeName>
        <fullName>Purinergic receptor</fullName>
    </alternativeName>
</protein>
<gene>
    <name evidence="12" type="primary">P2RX5</name>
    <name type="synonym">P2X5</name>
    <name evidence="10" type="synonym">P2X5FL</name>
</gene>
<sequence length="444" mass="49303">MGQAGCKGLCLSLFDYKTEKYVIAKNKKVGLLYRLLQASILAYLVVWVFLIKKGYQDVDTSLQSAVITKVKGVAFTNTSDLGQRIWDVADYVIPAQGENVFFVVTNLIVTPNQRQNVCAENEGIPDGACSKDSDCHAGEAVTAGNGVKTGRCLRRENLARGTCEIFAWCPLETSSRPEEPFLKEAEDFTIFIKNHIRFPKFNFSKSNVMDVKDRSFLKSCHFGPKNHYCPIFRLGSVIRWAGSDFQDIALEGGVIGINIEWNCDLDKAASECHPHYSFSRLDNKLSKSVSSGYNFRFARYYRDAAGVEFRTLMKAYGIRFDVMVNGKAGKFSIIPTIINVGSGVALMGAGAFFCDLVLIYLIKKREFYRDKKYEEVRGLEDSSQEAEDEASGLGLSEQLTSGPGLLGMPEQQELQEPPEAKRGSSSQKGNGSVCPQLLEPHRST</sequence>